<reference key="1">
    <citation type="journal article" date="1999" name="Mol. Gen. Genet.">
        <title>Identification of nuclear genes encoding mitochondrial proteins: isolation of a collection of D. melanogaster cDNAs homologous to sequences in the Human Gene Index database.</title>
        <authorList>
            <person name="Caggese C."/>
            <person name="Ragone G."/>
            <person name="Perrini B."/>
            <person name="Moschetti R."/>
            <person name="de Pinto V."/>
            <person name="Caizzi R."/>
            <person name="Barsanti P."/>
        </authorList>
    </citation>
    <scope>NUCLEOTIDE SEQUENCE [MRNA]</scope>
</reference>
<reference key="2">
    <citation type="journal article" date="2000" name="Genetics">
        <title>The oxen gene of Drosophila encodes a homolog of subunit 9 of yeast ubiquinol-cytochrome c oxidoreductase complex: evidence for modulation of gene expression in response to mitochondrial activity.</title>
        <authorList>
            <person name="Frolov M.V."/>
            <person name="Benevolenskaya E.V."/>
            <person name="Birchler J.A."/>
        </authorList>
    </citation>
    <scope>NUCLEOTIDE SEQUENCE [GENOMIC DNA]</scope>
</reference>
<reference key="3">
    <citation type="journal article" date="2000" name="Science">
        <title>The genome sequence of Drosophila melanogaster.</title>
        <authorList>
            <person name="Adams M.D."/>
            <person name="Celniker S.E."/>
            <person name="Holt R.A."/>
            <person name="Evans C.A."/>
            <person name="Gocayne J.D."/>
            <person name="Amanatides P.G."/>
            <person name="Scherer S.E."/>
            <person name="Li P.W."/>
            <person name="Hoskins R.A."/>
            <person name="Galle R.F."/>
            <person name="George R.A."/>
            <person name="Lewis S.E."/>
            <person name="Richards S."/>
            <person name="Ashburner M."/>
            <person name="Henderson S.N."/>
            <person name="Sutton G.G."/>
            <person name="Wortman J.R."/>
            <person name="Yandell M.D."/>
            <person name="Zhang Q."/>
            <person name="Chen L.X."/>
            <person name="Brandon R.C."/>
            <person name="Rogers Y.-H.C."/>
            <person name="Blazej R.G."/>
            <person name="Champe M."/>
            <person name="Pfeiffer B.D."/>
            <person name="Wan K.H."/>
            <person name="Doyle C."/>
            <person name="Baxter E.G."/>
            <person name="Helt G."/>
            <person name="Nelson C.R."/>
            <person name="Miklos G.L.G."/>
            <person name="Abril J.F."/>
            <person name="Agbayani A."/>
            <person name="An H.-J."/>
            <person name="Andrews-Pfannkoch C."/>
            <person name="Baldwin D."/>
            <person name="Ballew R.M."/>
            <person name="Basu A."/>
            <person name="Baxendale J."/>
            <person name="Bayraktaroglu L."/>
            <person name="Beasley E.M."/>
            <person name="Beeson K.Y."/>
            <person name="Benos P.V."/>
            <person name="Berman B.P."/>
            <person name="Bhandari D."/>
            <person name="Bolshakov S."/>
            <person name="Borkova D."/>
            <person name="Botchan M.R."/>
            <person name="Bouck J."/>
            <person name="Brokstein P."/>
            <person name="Brottier P."/>
            <person name="Burtis K.C."/>
            <person name="Busam D.A."/>
            <person name="Butler H."/>
            <person name="Cadieu E."/>
            <person name="Center A."/>
            <person name="Chandra I."/>
            <person name="Cherry J.M."/>
            <person name="Cawley S."/>
            <person name="Dahlke C."/>
            <person name="Davenport L.B."/>
            <person name="Davies P."/>
            <person name="de Pablos B."/>
            <person name="Delcher A."/>
            <person name="Deng Z."/>
            <person name="Mays A.D."/>
            <person name="Dew I."/>
            <person name="Dietz S.M."/>
            <person name="Dodson K."/>
            <person name="Doup L.E."/>
            <person name="Downes M."/>
            <person name="Dugan-Rocha S."/>
            <person name="Dunkov B.C."/>
            <person name="Dunn P."/>
            <person name="Durbin K.J."/>
            <person name="Evangelista C.C."/>
            <person name="Ferraz C."/>
            <person name="Ferriera S."/>
            <person name="Fleischmann W."/>
            <person name="Fosler C."/>
            <person name="Gabrielian A.E."/>
            <person name="Garg N.S."/>
            <person name="Gelbart W.M."/>
            <person name="Glasser K."/>
            <person name="Glodek A."/>
            <person name="Gong F."/>
            <person name="Gorrell J.H."/>
            <person name="Gu Z."/>
            <person name="Guan P."/>
            <person name="Harris M."/>
            <person name="Harris N.L."/>
            <person name="Harvey D.A."/>
            <person name="Heiman T.J."/>
            <person name="Hernandez J.R."/>
            <person name="Houck J."/>
            <person name="Hostin D."/>
            <person name="Houston K.A."/>
            <person name="Howland T.J."/>
            <person name="Wei M.-H."/>
            <person name="Ibegwam C."/>
            <person name="Jalali M."/>
            <person name="Kalush F."/>
            <person name="Karpen G.H."/>
            <person name="Ke Z."/>
            <person name="Kennison J.A."/>
            <person name="Ketchum K.A."/>
            <person name="Kimmel B.E."/>
            <person name="Kodira C.D."/>
            <person name="Kraft C.L."/>
            <person name="Kravitz S."/>
            <person name="Kulp D."/>
            <person name="Lai Z."/>
            <person name="Lasko P."/>
            <person name="Lei Y."/>
            <person name="Levitsky A.A."/>
            <person name="Li J.H."/>
            <person name="Li Z."/>
            <person name="Liang Y."/>
            <person name="Lin X."/>
            <person name="Liu X."/>
            <person name="Mattei B."/>
            <person name="McIntosh T.C."/>
            <person name="McLeod M.P."/>
            <person name="McPherson D."/>
            <person name="Merkulov G."/>
            <person name="Milshina N.V."/>
            <person name="Mobarry C."/>
            <person name="Morris J."/>
            <person name="Moshrefi A."/>
            <person name="Mount S.M."/>
            <person name="Moy M."/>
            <person name="Murphy B."/>
            <person name="Murphy L."/>
            <person name="Muzny D.M."/>
            <person name="Nelson D.L."/>
            <person name="Nelson D.R."/>
            <person name="Nelson K.A."/>
            <person name="Nixon K."/>
            <person name="Nusskern D.R."/>
            <person name="Pacleb J.M."/>
            <person name="Palazzolo M."/>
            <person name="Pittman G.S."/>
            <person name="Pan S."/>
            <person name="Pollard J."/>
            <person name="Puri V."/>
            <person name="Reese M.G."/>
            <person name="Reinert K."/>
            <person name="Remington K."/>
            <person name="Saunders R.D.C."/>
            <person name="Scheeler F."/>
            <person name="Shen H."/>
            <person name="Shue B.C."/>
            <person name="Siden-Kiamos I."/>
            <person name="Simpson M."/>
            <person name="Skupski M.P."/>
            <person name="Smith T.J."/>
            <person name="Spier E."/>
            <person name="Spradling A.C."/>
            <person name="Stapleton M."/>
            <person name="Strong R."/>
            <person name="Sun E."/>
            <person name="Svirskas R."/>
            <person name="Tector C."/>
            <person name="Turner R."/>
            <person name="Venter E."/>
            <person name="Wang A.H."/>
            <person name="Wang X."/>
            <person name="Wang Z.-Y."/>
            <person name="Wassarman D.A."/>
            <person name="Weinstock G.M."/>
            <person name="Weissenbach J."/>
            <person name="Williams S.M."/>
            <person name="Woodage T."/>
            <person name="Worley K.C."/>
            <person name="Wu D."/>
            <person name="Yang S."/>
            <person name="Yao Q.A."/>
            <person name="Ye J."/>
            <person name="Yeh R.-F."/>
            <person name="Zaveri J.S."/>
            <person name="Zhan M."/>
            <person name="Zhang G."/>
            <person name="Zhao Q."/>
            <person name="Zheng L."/>
            <person name="Zheng X.H."/>
            <person name="Zhong F.N."/>
            <person name="Zhong W."/>
            <person name="Zhou X."/>
            <person name="Zhu S.C."/>
            <person name="Zhu X."/>
            <person name="Smith H.O."/>
            <person name="Gibbs R.A."/>
            <person name="Myers E.W."/>
            <person name="Rubin G.M."/>
            <person name="Venter J.C."/>
        </authorList>
    </citation>
    <scope>NUCLEOTIDE SEQUENCE [LARGE SCALE GENOMIC DNA]</scope>
    <source>
        <strain>Berkeley</strain>
    </source>
</reference>
<reference key="4">
    <citation type="journal article" date="2002" name="Genome Biol.">
        <title>Annotation of the Drosophila melanogaster euchromatic genome: a systematic review.</title>
        <authorList>
            <person name="Misra S."/>
            <person name="Crosby M.A."/>
            <person name="Mungall C.J."/>
            <person name="Matthews B.B."/>
            <person name="Campbell K.S."/>
            <person name="Hradecky P."/>
            <person name="Huang Y."/>
            <person name="Kaminker J.S."/>
            <person name="Millburn G.H."/>
            <person name="Prochnik S.E."/>
            <person name="Smith C.D."/>
            <person name="Tupy J.L."/>
            <person name="Whitfield E.J."/>
            <person name="Bayraktaroglu L."/>
            <person name="Berman B.P."/>
            <person name="Bettencourt B.R."/>
            <person name="Celniker S.E."/>
            <person name="de Grey A.D.N.J."/>
            <person name="Drysdale R.A."/>
            <person name="Harris N.L."/>
            <person name="Richter J."/>
            <person name="Russo S."/>
            <person name="Schroeder A.J."/>
            <person name="Shu S.Q."/>
            <person name="Stapleton M."/>
            <person name="Yamada C."/>
            <person name="Ashburner M."/>
            <person name="Gelbart W.M."/>
            <person name="Rubin G.M."/>
            <person name="Lewis S.E."/>
        </authorList>
    </citation>
    <scope>GENOME REANNOTATION</scope>
    <source>
        <strain>Berkeley</strain>
    </source>
</reference>
<reference key="5">
    <citation type="journal article" date="2002" name="Genome Biol.">
        <title>A Drosophila full-length cDNA resource.</title>
        <authorList>
            <person name="Stapleton M."/>
            <person name="Carlson J.W."/>
            <person name="Brokstein P."/>
            <person name="Yu C."/>
            <person name="Champe M."/>
            <person name="George R.A."/>
            <person name="Guarin H."/>
            <person name="Kronmiller B."/>
            <person name="Pacleb J.M."/>
            <person name="Park S."/>
            <person name="Wan K.H."/>
            <person name="Rubin G.M."/>
            <person name="Celniker S.E."/>
        </authorList>
    </citation>
    <scope>NUCLEOTIDE SEQUENCE [LARGE SCALE MRNA]</scope>
    <source>
        <strain>Berkeley</strain>
        <tissue>Head</tissue>
    </source>
</reference>
<reference key="6">
    <citation type="journal article" date="2004" name="Dev. Cell">
        <title>Localization-dependent oskar protein accumulation; control after the initiation of translation.</title>
        <authorList>
            <person name="Braat A.K."/>
            <person name="Yan N."/>
            <person name="Arn E."/>
            <person name="Harrison D."/>
            <person name="Macdonald P.M."/>
        </authorList>
    </citation>
    <scope>FUNCTION</scope>
    <scope>INTERACTION WITH BIC</scope>
</reference>
<evidence type="ECO:0000250" key="1"/>
<evidence type="ECO:0000255" key="2">
    <source>
        <dbReference type="PROSITE-ProRule" id="PRU00507"/>
    </source>
</evidence>
<evidence type="ECO:0000256" key="3">
    <source>
        <dbReference type="SAM" id="MobiDB-lite"/>
    </source>
</evidence>
<evidence type="ECO:0000269" key="4">
    <source>
    </source>
</evidence>
<evidence type="ECO:0000305" key="5"/>
<keyword id="KW-0217">Developmental protein</keyword>
<keyword id="KW-0653">Protein transport</keyword>
<keyword id="KW-1185">Reference proteome</keyword>
<keyword id="KW-0813">Transport</keyword>
<gene>
    <name type="primary">Nacalpha</name>
    <name type="synonym">aic</name>
    <name type="ORF">CG8759</name>
</gene>
<organism>
    <name type="scientific">Drosophila melanogaster</name>
    <name type="common">Fruit fly</name>
    <dbReference type="NCBI Taxonomy" id="7227"/>
    <lineage>
        <taxon>Eukaryota</taxon>
        <taxon>Metazoa</taxon>
        <taxon>Ecdysozoa</taxon>
        <taxon>Arthropoda</taxon>
        <taxon>Hexapoda</taxon>
        <taxon>Insecta</taxon>
        <taxon>Pterygota</taxon>
        <taxon>Neoptera</taxon>
        <taxon>Endopterygota</taxon>
        <taxon>Diptera</taxon>
        <taxon>Brachycera</taxon>
        <taxon>Muscomorpha</taxon>
        <taxon>Ephydroidea</taxon>
        <taxon>Drosophilidae</taxon>
        <taxon>Drosophila</taxon>
        <taxon>Sophophora</taxon>
    </lineage>
</organism>
<comment type="function">
    <text evidence="1 4">May promote appropriate targeting of ribosome-nascent polypeptide complexes (By similarity). Required for correct localization of the osk/oskar protein to the posterior pole during embryonic development. The osk protein directs the recruitment of molecules responsible for posterior body patterning and germline formation in the embryo.</text>
</comment>
<comment type="subunit">
    <text>Part of the nascent polypeptide-associated complex (NAC), consisting of Nac-alpha and bicaudal (bic).</text>
</comment>
<comment type="interaction">
    <interactant intactId="EBI-127575">
        <id>Q94518</id>
    </interactant>
    <interactant intactId="EBI-110745">
        <id>Q7KM15</id>
        <label>bic</label>
    </interactant>
    <organismsDiffer>false</organismsDiffer>
    <experiments>6</experiments>
</comment>
<comment type="interaction">
    <interactant intactId="EBI-127575">
        <id>Q94518</id>
    </interactant>
    <interactant intactId="EBI-15121031">
        <id>B3DNI1</id>
        <label>CG13402-RA</label>
    </interactant>
    <organismsDiffer>false</organismsDiffer>
    <experiments>4</experiments>
</comment>
<comment type="similarity">
    <text evidence="5">Belongs to the NAC-alpha family.</text>
</comment>
<accession>Q94518</accession>
<accession>A4UZF1</accession>
<accession>O16813</accession>
<accession>Q0E999</accession>
<feature type="chain" id="PRO_0000135586" description="Nascent polypeptide-associated complex subunit alpha">
    <location>
        <begin position="1"/>
        <end position="217"/>
    </location>
</feature>
<feature type="domain" description="NAC-A/B" evidence="2">
    <location>
        <begin position="70"/>
        <end position="135"/>
    </location>
</feature>
<feature type="domain" description="UBA">
    <location>
        <begin position="177"/>
        <end position="217"/>
    </location>
</feature>
<feature type="region of interest" description="Disordered" evidence="3">
    <location>
        <begin position="1"/>
        <end position="45"/>
    </location>
</feature>
<feature type="region of interest" description="Disordered" evidence="3">
    <location>
        <begin position="154"/>
        <end position="177"/>
    </location>
</feature>
<feature type="compositionally biased region" description="Basic and acidic residues" evidence="3">
    <location>
        <begin position="19"/>
        <end position="28"/>
    </location>
</feature>
<feature type="compositionally biased region" description="Acidic residues" evidence="3">
    <location>
        <begin position="165"/>
        <end position="176"/>
    </location>
</feature>
<feature type="sequence conflict" description="In Ref. 1; CAA70166." evidence="5" ref="1">
    <original>A</original>
    <variation>P</variation>
    <location>
        <position position="47"/>
    </location>
</feature>
<feature type="sequence conflict" description="In Ref. 1; CAA70166." evidence="5" ref="1">
    <original>D</original>
    <variation>N</variation>
    <location>
        <position position="110"/>
    </location>
</feature>
<feature type="sequence conflict" description="In Ref. 1; CAA70166." evidence="5" ref="1">
    <original>N</original>
    <variation>D</variation>
    <location>
        <position position="204"/>
    </location>
</feature>
<sequence>MPELTEIKSEAAPSTSAEAKPEDVRVEDDGSDSDSDGGMPGLEEAVAATTQLGGGATGLPIDLVSKAKQSRGEKKARKIMLKLGLKQIQGVNRVTIRKSKNILFVINNPDVYKNPHSDTYIVFGEAKIEDLSQQAQVAAAEKFKAPEAAGAADSVGATTSVAPIAEEDEEDVDDTGVDEKDIELVITQANTTRAKAIKALKNNNNDIVNAIMELTML</sequence>
<protein>
    <recommendedName>
        <fullName>Nascent polypeptide-associated complex subunit alpha</fullName>
        <shortName>NAC-alpha</shortName>
    </recommendedName>
    <alternativeName>
        <fullName>Alpha-NAC</fullName>
    </alternativeName>
</protein>
<proteinExistence type="evidence at protein level"/>
<dbReference type="EMBL" id="Y08969">
    <property type="protein sequence ID" value="CAA70166.1"/>
    <property type="molecule type" value="mRNA"/>
</dbReference>
<dbReference type="EMBL" id="AF017783">
    <property type="protein sequence ID" value="AAB97513.1"/>
    <property type="molecule type" value="Genomic_DNA"/>
</dbReference>
<dbReference type="EMBL" id="AE013599">
    <property type="protein sequence ID" value="AAM68653.1"/>
    <property type="molecule type" value="Genomic_DNA"/>
</dbReference>
<dbReference type="EMBL" id="AE013599">
    <property type="protein sequence ID" value="AAM68654.1"/>
    <property type="molecule type" value="Genomic_DNA"/>
</dbReference>
<dbReference type="EMBL" id="AY075332">
    <property type="protein sequence ID" value="AAL68199.1"/>
    <property type="molecule type" value="mRNA"/>
</dbReference>
<dbReference type="RefSeq" id="NP_001286363.1">
    <property type="nucleotide sequence ID" value="NM_001299434.1"/>
</dbReference>
<dbReference type="RefSeq" id="NP_477216.1">
    <property type="nucleotide sequence ID" value="NM_057868.4"/>
</dbReference>
<dbReference type="RefSeq" id="NP_599139.1">
    <property type="nucleotide sequence ID" value="NM_134312.3"/>
</dbReference>
<dbReference type="RefSeq" id="NP_725229.1">
    <property type="nucleotide sequence ID" value="NM_165950.2"/>
</dbReference>
<dbReference type="SMR" id="Q94518"/>
<dbReference type="BioGRID" id="62181">
    <property type="interactions" value="87"/>
</dbReference>
<dbReference type="FunCoup" id="Q94518">
    <property type="interactions" value="1312"/>
</dbReference>
<dbReference type="IntAct" id="Q94518">
    <property type="interactions" value="200"/>
</dbReference>
<dbReference type="STRING" id="7227.FBpp0086971"/>
<dbReference type="PaxDb" id="7227-FBpp0086971"/>
<dbReference type="DNASU" id="36409"/>
<dbReference type="EnsemblMetazoa" id="FBtr0087858">
    <property type="protein sequence ID" value="FBpp0086971"/>
    <property type="gene ID" value="FBgn0086904"/>
</dbReference>
<dbReference type="EnsemblMetazoa" id="FBtr0087859">
    <property type="protein sequence ID" value="FBpp0086972"/>
    <property type="gene ID" value="FBgn0086904"/>
</dbReference>
<dbReference type="EnsemblMetazoa" id="FBtr0087860">
    <property type="protein sequence ID" value="FBpp0086973"/>
    <property type="gene ID" value="FBgn0086904"/>
</dbReference>
<dbReference type="EnsemblMetazoa" id="FBtr0345195">
    <property type="protein sequence ID" value="FBpp0311394"/>
    <property type="gene ID" value="FBgn0086904"/>
</dbReference>
<dbReference type="GeneID" id="36409"/>
<dbReference type="KEGG" id="dme:Dmel_CG8759"/>
<dbReference type="AGR" id="FB:FBgn0086904"/>
<dbReference type="CTD" id="36409"/>
<dbReference type="FlyBase" id="FBgn0086904">
    <property type="gene designation" value="Nacalpha"/>
</dbReference>
<dbReference type="VEuPathDB" id="VectorBase:FBgn0086904"/>
<dbReference type="eggNOG" id="KOG2239">
    <property type="taxonomic scope" value="Eukaryota"/>
</dbReference>
<dbReference type="GeneTree" id="ENSGT00940000161501"/>
<dbReference type="HOGENOM" id="CLU_057806_1_2_1"/>
<dbReference type="InParanoid" id="Q94518"/>
<dbReference type="OMA" id="SQKMIFA"/>
<dbReference type="OrthoDB" id="3169036at2759"/>
<dbReference type="PhylomeDB" id="Q94518"/>
<dbReference type="SignaLink" id="Q94518"/>
<dbReference type="BioGRID-ORCS" id="36409">
    <property type="hits" value="1 hit in 3 CRISPR screens"/>
</dbReference>
<dbReference type="ChiTaRS" id="Nacalpha">
    <property type="organism name" value="fly"/>
</dbReference>
<dbReference type="GenomeRNAi" id="36409"/>
<dbReference type="PRO" id="PR:Q94518"/>
<dbReference type="Proteomes" id="UP000000803">
    <property type="component" value="Chromosome 2R"/>
</dbReference>
<dbReference type="Bgee" id="FBgn0086904">
    <property type="expression patterns" value="Expressed in embryonic/larval hemocyte (Drosophila) and 299 other cell types or tissues"/>
</dbReference>
<dbReference type="ExpressionAtlas" id="Q94518">
    <property type="expression patterns" value="baseline and differential"/>
</dbReference>
<dbReference type="GO" id="GO:0005737">
    <property type="term" value="C:cytoplasm"/>
    <property type="evidence" value="ECO:0000318"/>
    <property type="project" value="GO_Central"/>
</dbReference>
<dbReference type="GO" id="GO:0005854">
    <property type="term" value="C:nascent polypeptide-associated complex"/>
    <property type="evidence" value="ECO:0000250"/>
    <property type="project" value="FlyBase"/>
</dbReference>
<dbReference type="GO" id="GO:0043022">
    <property type="term" value="F:ribosome binding"/>
    <property type="evidence" value="ECO:0000250"/>
    <property type="project" value="FlyBase"/>
</dbReference>
<dbReference type="GO" id="GO:0051082">
    <property type="term" value="F:unfolded protein binding"/>
    <property type="evidence" value="ECO:0000318"/>
    <property type="project" value="GO_Central"/>
</dbReference>
<dbReference type="GO" id="GO:0006612">
    <property type="term" value="P:protein targeting to membrane"/>
    <property type="evidence" value="ECO:0000318"/>
    <property type="project" value="GO_Central"/>
</dbReference>
<dbReference type="GO" id="GO:0015031">
    <property type="term" value="P:protein transport"/>
    <property type="evidence" value="ECO:0007669"/>
    <property type="project" value="UniProtKB-KW"/>
</dbReference>
<dbReference type="CDD" id="cd22054">
    <property type="entry name" value="NAC_NACA"/>
    <property type="match status" value="1"/>
</dbReference>
<dbReference type="CDD" id="cd14358">
    <property type="entry name" value="UBA_NAC_euk"/>
    <property type="match status" value="1"/>
</dbReference>
<dbReference type="FunFam" id="2.20.70.30:FF:000002">
    <property type="entry name" value="Nascent polypeptide-associated complex (NAC), alpha subunit"/>
    <property type="match status" value="1"/>
</dbReference>
<dbReference type="FunFam" id="1.10.8.10:FF:000006">
    <property type="entry name" value="Putative nascent polypeptide-associated complex subunit alpha"/>
    <property type="match status" value="1"/>
</dbReference>
<dbReference type="Gene3D" id="1.10.8.10">
    <property type="entry name" value="DNA helicase RuvA subunit, C-terminal domain"/>
    <property type="match status" value="1"/>
</dbReference>
<dbReference type="Gene3D" id="2.20.70.30">
    <property type="entry name" value="Nascent polypeptide-associated complex domain"/>
    <property type="match status" value="1"/>
</dbReference>
<dbReference type="InterPro" id="IPR016641">
    <property type="entry name" value="EGD2/NACA0like"/>
</dbReference>
<dbReference type="InterPro" id="IPR044034">
    <property type="entry name" value="NAC-like_UBA"/>
</dbReference>
<dbReference type="InterPro" id="IPR038187">
    <property type="entry name" value="NAC_A/B_dom_sf"/>
</dbReference>
<dbReference type="InterPro" id="IPR002715">
    <property type="entry name" value="Nas_poly-pep-assoc_cplx_dom"/>
</dbReference>
<dbReference type="PANTHER" id="PTHR21713">
    <property type="entry name" value="NASCENT POLYPEPTIDE ASSOCIATED COMPLEX ALPHA SUBUNIT-RELATED"/>
    <property type="match status" value="1"/>
</dbReference>
<dbReference type="Pfam" id="PF01849">
    <property type="entry name" value="NAC"/>
    <property type="match status" value="1"/>
</dbReference>
<dbReference type="Pfam" id="PF19026">
    <property type="entry name" value="UBA_HYPK"/>
    <property type="match status" value="1"/>
</dbReference>
<dbReference type="PIRSF" id="PIRSF015901">
    <property type="entry name" value="NAC_alpha"/>
    <property type="match status" value="1"/>
</dbReference>
<dbReference type="SMART" id="SM01407">
    <property type="entry name" value="NAC"/>
    <property type="match status" value="1"/>
</dbReference>
<dbReference type="PROSITE" id="PS51151">
    <property type="entry name" value="NAC_AB"/>
    <property type="match status" value="1"/>
</dbReference>
<name>NACA_DROME</name>